<evidence type="ECO:0000250" key="1"/>
<evidence type="ECO:0000255" key="2"/>
<evidence type="ECO:0000255" key="3">
    <source>
        <dbReference type="PROSITE-ProRule" id="PRU00102"/>
    </source>
</evidence>
<evidence type="ECO:0000255" key="4">
    <source>
        <dbReference type="PROSITE-ProRule" id="PRU00107"/>
    </source>
</evidence>
<accession>Q6G9E7</accession>
<protein>
    <recommendedName>
        <fullName>Signal transduction histidine-protein kinase ArlS</fullName>
        <ecNumber>2.7.13.3</ecNumber>
    </recommendedName>
</protein>
<name>ARLS_STAAS</name>
<organism>
    <name type="scientific">Staphylococcus aureus (strain MSSA476)</name>
    <dbReference type="NCBI Taxonomy" id="282459"/>
    <lineage>
        <taxon>Bacteria</taxon>
        <taxon>Bacillati</taxon>
        <taxon>Bacillota</taxon>
        <taxon>Bacilli</taxon>
        <taxon>Bacillales</taxon>
        <taxon>Staphylococcaceae</taxon>
        <taxon>Staphylococcus</taxon>
    </lineage>
</organism>
<proteinExistence type="inferred from homology"/>
<gene>
    <name type="primary">arlS</name>
    <name type="ordered locus">SAS1357</name>
</gene>
<comment type="function">
    <text evidence="1">Member of the two-component regulatory system ArlS/ArlR involved in the regulation of adhesion, autolysis, multidrug resistance and virulence. ArlS probably functions as a sensor protein kinase which is autophosphorylated at a histidine residue and transfers its phosphate group to ArlR (By similarity).</text>
</comment>
<comment type="catalytic activity">
    <reaction>
        <text>ATP + protein L-histidine = ADP + protein N-phospho-L-histidine.</text>
        <dbReference type="EC" id="2.7.13.3"/>
    </reaction>
</comment>
<comment type="subcellular location">
    <subcellularLocation>
        <location evidence="1">Cell membrane</location>
        <topology evidence="1">Multi-pass membrane protein</topology>
    </subcellularLocation>
</comment>
<comment type="PTM">
    <text evidence="1">Autophosphorylated.</text>
</comment>
<keyword id="KW-0067">ATP-binding</keyword>
<keyword id="KW-1003">Cell membrane</keyword>
<keyword id="KW-0418">Kinase</keyword>
<keyword id="KW-0472">Membrane</keyword>
<keyword id="KW-0547">Nucleotide-binding</keyword>
<keyword id="KW-0597">Phosphoprotein</keyword>
<keyword id="KW-0808">Transferase</keyword>
<keyword id="KW-0812">Transmembrane</keyword>
<keyword id="KW-1133">Transmembrane helix</keyword>
<keyword id="KW-0902">Two-component regulatory system</keyword>
<keyword id="KW-0843">Virulence</keyword>
<feature type="chain" id="PRO_0000074693" description="Signal transduction histidine-protein kinase ArlS">
    <location>
        <begin position="1"/>
        <end position="451"/>
    </location>
</feature>
<feature type="transmembrane region" description="Helical" evidence="2">
    <location>
        <begin position="11"/>
        <end position="31"/>
    </location>
</feature>
<feature type="transmembrane region" description="Helical" evidence="2">
    <location>
        <begin position="156"/>
        <end position="176"/>
    </location>
</feature>
<feature type="domain" description="HAMP" evidence="3">
    <location>
        <begin position="178"/>
        <end position="231"/>
    </location>
</feature>
<feature type="domain" description="Histidine kinase" evidence="4">
    <location>
        <begin position="239"/>
        <end position="451"/>
    </location>
</feature>
<feature type="modified residue" description="Phosphohistidine; by autocatalysis" evidence="4">
    <location>
        <position position="242"/>
    </location>
</feature>
<sequence>MTKRKLRNNWIIVTTMITFVTIFLFCLIIIFFLKDTLHNSELDDAERSSSDINNLFHSKPVKDISALDLNASLGNFQEIIIYDEHNNKLFETSNDNTVRVEPGYEHRYFDRVIKKRYKGIEYLIIKEPITTQDFKGYSLLIHSLENYDNIVKSLYIIALAFGVIATIITATISYVFSTQITKPLVSLSNKMIEIRRDGFQNKLQLNTNYEEIDNLANTFNEMMSQIEESFNQQRQFVEDASHELRTPLQIIQGHLNLIQRWGKKDPAVLEESLNISIEEMNRIIKLVEELLELTKGDVNDISSEAQTVHINDEIRSRIHSLKQLHPDYQFDTDLTSKNLEIKMKPHQFEQLFLIFIDNAIKYDVKNKKIKVKTRLKNKQKIIEITDHGIGIPEEDQDFIFDRFYRVDKSRSRSQGGNGLGLSIAQKIIQLNGGSIKIKSEINKGTTFKIIF</sequence>
<dbReference type="EC" id="2.7.13.3"/>
<dbReference type="EMBL" id="BX571857">
    <property type="protein sequence ID" value="CAG43132.1"/>
    <property type="molecule type" value="Genomic_DNA"/>
</dbReference>
<dbReference type="RefSeq" id="WP_000166801.1">
    <property type="nucleotide sequence ID" value="NC_002953.3"/>
</dbReference>
<dbReference type="SMR" id="Q6G9E7"/>
<dbReference type="KEGG" id="sas:SAS1357"/>
<dbReference type="HOGENOM" id="CLU_000445_89_6_9"/>
<dbReference type="GO" id="GO:0005886">
    <property type="term" value="C:plasma membrane"/>
    <property type="evidence" value="ECO:0007669"/>
    <property type="project" value="UniProtKB-SubCell"/>
</dbReference>
<dbReference type="GO" id="GO:0005524">
    <property type="term" value="F:ATP binding"/>
    <property type="evidence" value="ECO:0007669"/>
    <property type="project" value="UniProtKB-KW"/>
</dbReference>
<dbReference type="GO" id="GO:0000155">
    <property type="term" value="F:phosphorelay sensor kinase activity"/>
    <property type="evidence" value="ECO:0007669"/>
    <property type="project" value="InterPro"/>
</dbReference>
<dbReference type="CDD" id="cd00075">
    <property type="entry name" value="HATPase"/>
    <property type="match status" value="1"/>
</dbReference>
<dbReference type="CDD" id="cd00082">
    <property type="entry name" value="HisKA"/>
    <property type="match status" value="1"/>
</dbReference>
<dbReference type="FunFam" id="3.30.565.10:FF:000006">
    <property type="entry name" value="Sensor histidine kinase WalK"/>
    <property type="match status" value="1"/>
</dbReference>
<dbReference type="FunFam" id="1.10.287.130:FF:000001">
    <property type="entry name" value="Two-component sensor histidine kinase"/>
    <property type="match status" value="1"/>
</dbReference>
<dbReference type="Gene3D" id="1.10.287.130">
    <property type="match status" value="1"/>
</dbReference>
<dbReference type="Gene3D" id="6.10.340.10">
    <property type="match status" value="1"/>
</dbReference>
<dbReference type="Gene3D" id="3.30.565.10">
    <property type="entry name" value="Histidine kinase-like ATPase, C-terminal domain"/>
    <property type="match status" value="1"/>
</dbReference>
<dbReference type="InterPro" id="IPR041610">
    <property type="entry name" value="ArlS_N"/>
</dbReference>
<dbReference type="InterPro" id="IPR050398">
    <property type="entry name" value="Bact_Sensor_His_Kinase"/>
</dbReference>
<dbReference type="InterPro" id="IPR003660">
    <property type="entry name" value="HAMP_dom"/>
</dbReference>
<dbReference type="InterPro" id="IPR036890">
    <property type="entry name" value="HATPase_C_sf"/>
</dbReference>
<dbReference type="InterPro" id="IPR005467">
    <property type="entry name" value="His_kinase_dom"/>
</dbReference>
<dbReference type="InterPro" id="IPR003661">
    <property type="entry name" value="HisK_dim/P_dom"/>
</dbReference>
<dbReference type="InterPro" id="IPR036097">
    <property type="entry name" value="HisK_dim/P_sf"/>
</dbReference>
<dbReference type="InterPro" id="IPR004358">
    <property type="entry name" value="Sig_transdc_His_kin-like_C"/>
</dbReference>
<dbReference type="PANTHER" id="PTHR45528:SF12">
    <property type="entry name" value="SENSOR HISTIDINE KINASE ARSS"/>
    <property type="match status" value="1"/>
</dbReference>
<dbReference type="PANTHER" id="PTHR45528">
    <property type="entry name" value="SENSOR HISTIDINE KINASE CPXA"/>
    <property type="match status" value="1"/>
</dbReference>
<dbReference type="Pfam" id="PF18719">
    <property type="entry name" value="ArlS_N"/>
    <property type="match status" value="1"/>
</dbReference>
<dbReference type="Pfam" id="PF02518">
    <property type="entry name" value="HATPase_c"/>
    <property type="match status" value="1"/>
</dbReference>
<dbReference type="Pfam" id="PF00512">
    <property type="entry name" value="HisKA"/>
    <property type="match status" value="1"/>
</dbReference>
<dbReference type="PRINTS" id="PR00344">
    <property type="entry name" value="BCTRLSENSOR"/>
</dbReference>
<dbReference type="SMART" id="SM00387">
    <property type="entry name" value="HATPase_c"/>
    <property type="match status" value="1"/>
</dbReference>
<dbReference type="SMART" id="SM00388">
    <property type="entry name" value="HisKA"/>
    <property type="match status" value="1"/>
</dbReference>
<dbReference type="SUPFAM" id="SSF55874">
    <property type="entry name" value="ATPase domain of HSP90 chaperone/DNA topoisomerase II/histidine kinase"/>
    <property type="match status" value="1"/>
</dbReference>
<dbReference type="SUPFAM" id="SSF158472">
    <property type="entry name" value="HAMP domain-like"/>
    <property type="match status" value="1"/>
</dbReference>
<dbReference type="SUPFAM" id="SSF47384">
    <property type="entry name" value="Homodimeric domain of signal transducing histidine kinase"/>
    <property type="match status" value="1"/>
</dbReference>
<dbReference type="PROSITE" id="PS50885">
    <property type="entry name" value="HAMP"/>
    <property type="match status" value="1"/>
</dbReference>
<dbReference type="PROSITE" id="PS50109">
    <property type="entry name" value="HIS_KIN"/>
    <property type="match status" value="1"/>
</dbReference>
<reference key="1">
    <citation type="journal article" date="2004" name="Proc. Natl. Acad. Sci. U.S.A.">
        <title>Complete genomes of two clinical Staphylococcus aureus strains: evidence for the rapid evolution of virulence and drug resistance.</title>
        <authorList>
            <person name="Holden M.T.G."/>
            <person name="Feil E.J."/>
            <person name="Lindsay J.A."/>
            <person name="Peacock S.J."/>
            <person name="Day N.P.J."/>
            <person name="Enright M.C."/>
            <person name="Foster T.J."/>
            <person name="Moore C.E."/>
            <person name="Hurst L."/>
            <person name="Atkin R."/>
            <person name="Barron A."/>
            <person name="Bason N."/>
            <person name="Bentley S.D."/>
            <person name="Chillingworth C."/>
            <person name="Chillingworth T."/>
            <person name="Churcher C."/>
            <person name="Clark L."/>
            <person name="Corton C."/>
            <person name="Cronin A."/>
            <person name="Doggett J."/>
            <person name="Dowd L."/>
            <person name="Feltwell T."/>
            <person name="Hance Z."/>
            <person name="Harris B."/>
            <person name="Hauser H."/>
            <person name="Holroyd S."/>
            <person name="Jagels K."/>
            <person name="James K.D."/>
            <person name="Lennard N."/>
            <person name="Line A."/>
            <person name="Mayes R."/>
            <person name="Moule S."/>
            <person name="Mungall K."/>
            <person name="Ormond D."/>
            <person name="Quail M.A."/>
            <person name="Rabbinowitsch E."/>
            <person name="Rutherford K.M."/>
            <person name="Sanders M."/>
            <person name="Sharp S."/>
            <person name="Simmonds M."/>
            <person name="Stevens K."/>
            <person name="Whitehead S."/>
            <person name="Barrell B.G."/>
            <person name="Spratt B.G."/>
            <person name="Parkhill J."/>
        </authorList>
    </citation>
    <scope>NUCLEOTIDE SEQUENCE [LARGE SCALE GENOMIC DNA]</scope>
    <source>
        <strain>MSSA476</strain>
    </source>
</reference>